<name>ATPG_HERA2</name>
<gene>
    <name evidence="1" type="primary">atpG</name>
    <name type="ordered locus">Haur_4071</name>
</gene>
<organism>
    <name type="scientific">Herpetosiphon aurantiacus (strain ATCC 23779 / DSM 785 / 114-95)</name>
    <dbReference type="NCBI Taxonomy" id="316274"/>
    <lineage>
        <taxon>Bacteria</taxon>
        <taxon>Bacillati</taxon>
        <taxon>Chloroflexota</taxon>
        <taxon>Chloroflexia</taxon>
        <taxon>Herpetosiphonales</taxon>
        <taxon>Herpetosiphonaceae</taxon>
        <taxon>Herpetosiphon</taxon>
    </lineage>
</organism>
<keyword id="KW-0066">ATP synthesis</keyword>
<keyword id="KW-1003">Cell membrane</keyword>
<keyword id="KW-0139">CF(1)</keyword>
<keyword id="KW-0375">Hydrogen ion transport</keyword>
<keyword id="KW-0406">Ion transport</keyword>
<keyword id="KW-0472">Membrane</keyword>
<keyword id="KW-0813">Transport</keyword>
<dbReference type="EMBL" id="CP000875">
    <property type="protein sequence ID" value="ABX06703.1"/>
    <property type="molecule type" value="Genomic_DNA"/>
</dbReference>
<dbReference type="SMR" id="A9AVV3"/>
<dbReference type="FunCoup" id="A9AVV3">
    <property type="interactions" value="527"/>
</dbReference>
<dbReference type="STRING" id="316274.Haur_4071"/>
<dbReference type="KEGG" id="hau:Haur_4071"/>
<dbReference type="eggNOG" id="COG0224">
    <property type="taxonomic scope" value="Bacteria"/>
</dbReference>
<dbReference type="HOGENOM" id="CLU_050669_0_1_0"/>
<dbReference type="InParanoid" id="A9AVV3"/>
<dbReference type="Proteomes" id="UP000000787">
    <property type="component" value="Chromosome"/>
</dbReference>
<dbReference type="GO" id="GO:0005886">
    <property type="term" value="C:plasma membrane"/>
    <property type="evidence" value="ECO:0007669"/>
    <property type="project" value="UniProtKB-SubCell"/>
</dbReference>
<dbReference type="GO" id="GO:0045259">
    <property type="term" value="C:proton-transporting ATP synthase complex"/>
    <property type="evidence" value="ECO:0007669"/>
    <property type="project" value="UniProtKB-KW"/>
</dbReference>
<dbReference type="GO" id="GO:0005524">
    <property type="term" value="F:ATP binding"/>
    <property type="evidence" value="ECO:0007669"/>
    <property type="project" value="UniProtKB-UniRule"/>
</dbReference>
<dbReference type="GO" id="GO:0046933">
    <property type="term" value="F:proton-transporting ATP synthase activity, rotational mechanism"/>
    <property type="evidence" value="ECO:0007669"/>
    <property type="project" value="UniProtKB-UniRule"/>
</dbReference>
<dbReference type="GO" id="GO:0042777">
    <property type="term" value="P:proton motive force-driven plasma membrane ATP synthesis"/>
    <property type="evidence" value="ECO:0007669"/>
    <property type="project" value="UniProtKB-UniRule"/>
</dbReference>
<dbReference type="CDD" id="cd12151">
    <property type="entry name" value="F1-ATPase_gamma"/>
    <property type="match status" value="1"/>
</dbReference>
<dbReference type="FunFam" id="1.10.287.80:FF:000003">
    <property type="entry name" value="ATP synthase gamma chain, chloroplastic"/>
    <property type="match status" value="1"/>
</dbReference>
<dbReference type="Gene3D" id="3.40.1380.10">
    <property type="match status" value="1"/>
</dbReference>
<dbReference type="Gene3D" id="1.10.287.80">
    <property type="entry name" value="ATP synthase, gamma subunit, helix hairpin domain"/>
    <property type="match status" value="2"/>
</dbReference>
<dbReference type="HAMAP" id="MF_00815">
    <property type="entry name" value="ATP_synth_gamma_bact"/>
    <property type="match status" value="1"/>
</dbReference>
<dbReference type="InterPro" id="IPR035968">
    <property type="entry name" value="ATP_synth_F1_ATPase_gsu"/>
</dbReference>
<dbReference type="InterPro" id="IPR000131">
    <property type="entry name" value="ATP_synth_F1_gsu"/>
</dbReference>
<dbReference type="InterPro" id="IPR023632">
    <property type="entry name" value="ATP_synth_F1_gsu_CS"/>
</dbReference>
<dbReference type="NCBIfam" id="TIGR01146">
    <property type="entry name" value="ATPsyn_F1gamma"/>
    <property type="match status" value="1"/>
</dbReference>
<dbReference type="NCBIfam" id="NF010709">
    <property type="entry name" value="PRK14111.1"/>
    <property type="match status" value="1"/>
</dbReference>
<dbReference type="PANTHER" id="PTHR11693">
    <property type="entry name" value="ATP SYNTHASE GAMMA CHAIN"/>
    <property type="match status" value="1"/>
</dbReference>
<dbReference type="PANTHER" id="PTHR11693:SF22">
    <property type="entry name" value="ATP SYNTHASE SUBUNIT GAMMA, MITOCHONDRIAL"/>
    <property type="match status" value="1"/>
</dbReference>
<dbReference type="Pfam" id="PF00231">
    <property type="entry name" value="ATP-synt"/>
    <property type="match status" value="1"/>
</dbReference>
<dbReference type="PRINTS" id="PR00126">
    <property type="entry name" value="ATPASEGAMMA"/>
</dbReference>
<dbReference type="SUPFAM" id="SSF52943">
    <property type="entry name" value="ATP synthase (F1-ATPase), gamma subunit"/>
    <property type="match status" value="1"/>
</dbReference>
<dbReference type="PROSITE" id="PS00153">
    <property type="entry name" value="ATPASE_GAMMA"/>
    <property type="match status" value="1"/>
</dbReference>
<protein>
    <recommendedName>
        <fullName evidence="1">ATP synthase gamma chain</fullName>
    </recommendedName>
    <alternativeName>
        <fullName evidence="1">ATP synthase F1 sector gamma subunit</fullName>
    </alternativeName>
    <alternativeName>
        <fullName evidence="1">F-ATPase gamma subunit</fullName>
    </alternativeName>
</protein>
<proteinExistence type="inferred from homology"/>
<feature type="chain" id="PRO_1000134162" description="ATP synthase gamma chain">
    <location>
        <begin position="1"/>
        <end position="295"/>
    </location>
</feature>
<evidence type="ECO:0000255" key="1">
    <source>
        <dbReference type="HAMAP-Rule" id="MF_00815"/>
    </source>
</evidence>
<comment type="function">
    <text evidence="1">Produces ATP from ADP in the presence of a proton gradient across the membrane. The gamma chain is believed to be important in regulating ATPase activity and the flow of protons through the CF(0) complex.</text>
</comment>
<comment type="subunit">
    <text evidence="1">F-type ATPases have 2 components, CF(1) - the catalytic core - and CF(0) - the membrane proton channel. CF(1) has five subunits: alpha(3), beta(3), gamma(1), delta(1), epsilon(1). CF(0) has three main subunits: a, b and c.</text>
</comment>
<comment type="subcellular location">
    <subcellularLocation>
        <location evidence="1">Cell membrane</location>
        <topology evidence="1">Peripheral membrane protein</topology>
    </subcellularLocation>
</comment>
<comment type="similarity">
    <text evidence="1">Belongs to the ATPase gamma chain family.</text>
</comment>
<reference key="1">
    <citation type="journal article" date="2011" name="Stand. Genomic Sci.">
        <title>Complete genome sequence of the filamentous gliding predatory bacterium Herpetosiphon aurantiacus type strain (114-95(T)).</title>
        <authorList>
            <person name="Kiss H."/>
            <person name="Nett M."/>
            <person name="Domin N."/>
            <person name="Martin K."/>
            <person name="Maresca J.A."/>
            <person name="Copeland A."/>
            <person name="Lapidus A."/>
            <person name="Lucas S."/>
            <person name="Berry K.W."/>
            <person name="Glavina Del Rio T."/>
            <person name="Dalin E."/>
            <person name="Tice H."/>
            <person name="Pitluck S."/>
            <person name="Richardson P."/>
            <person name="Bruce D."/>
            <person name="Goodwin L."/>
            <person name="Han C."/>
            <person name="Detter J.C."/>
            <person name="Schmutz J."/>
            <person name="Brettin T."/>
            <person name="Land M."/>
            <person name="Hauser L."/>
            <person name="Kyrpides N.C."/>
            <person name="Ivanova N."/>
            <person name="Goeker M."/>
            <person name="Woyke T."/>
            <person name="Klenk H.P."/>
            <person name="Bryant D.A."/>
        </authorList>
    </citation>
    <scope>NUCLEOTIDE SEQUENCE [LARGE SCALE GENOMIC DNA]</scope>
    <source>
        <strain>ATCC 23779 / DSM 785 / 114-95</strain>
    </source>
</reference>
<sequence>MASAREIRRRIKSVKNTGKITKAMELVSASKMRRAQRNVLATRPYADRLYDVMGELTLRSMGGGTKHPLLQPHPTVTRVALILITPDRGLCGALNSNLTRAAARFITDQKSQGRSVSVIAIGKKGRDFILRVGQKLDSEIIGLGDAPPLVDVLPAATTAINGYSPDASGNYDYDEVYLLCAEFVNTLVQRPKLRRFLPVEAPGNAGATKVDYSYEPSQEDVLDQLLPRFIEVQLYQAILESIASEHSARMMAMRNANDNAKELVRDLTLTYNKARQAAITTEISEIAAGATALNQ</sequence>
<accession>A9AVV3</accession>